<name>GHRB_ECOHS</name>
<dbReference type="EC" id="1.1.1.79" evidence="1"/>
<dbReference type="EC" id="1.1.1.81" evidence="1"/>
<dbReference type="EMBL" id="CP000802">
    <property type="protein sequence ID" value="ABV07963.1"/>
    <property type="molecule type" value="Genomic_DNA"/>
</dbReference>
<dbReference type="RefSeq" id="WP_000805035.1">
    <property type="nucleotide sequence ID" value="NC_009800.1"/>
</dbReference>
<dbReference type="SMR" id="A8A609"/>
<dbReference type="KEGG" id="ecx:EcHS_A3754"/>
<dbReference type="HOGENOM" id="CLU_019796_1_2_6"/>
<dbReference type="GO" id="GO:0005829">
    <property type="term" value="C:cytosol"/>
    <property type="evidence" value="ECO:0007669"/>
    <property type="project" value="TreeGrafter"/>
</dbReference>
<dbReference type="GO" id="GO:0005886">
    <property type="term" value="C:plasma membrane"/>
    <property type="evidence" value="ECO:0007669"/>
    <property type="project" value="UniProtKB-UniRule"/>
</dbReference>
<dbReference type="GO" id="GO:0030267">
    <property type="term" value="F:glyoxylate reductase (NADPH) activity"/>
    <property type="evidence" value="ECO:0007669"/>
    <property type="project" value="UniProtKB-UniRule"/>
</dbReference>
<dbReference type="GO" id="GO:0008465">
    <property type="term" value="F:hydroxypyruvate reductase (NADH) activity"/>
    <property type="evidence" value="ECO:0007669"/>
    <property type="project" value="RHEA"/>
</dbReference>
<dbReference type="GO" id="GO:0120509">
    <property type="term" value="F:hydroxypyruvate reductase (NADPH) activity"/>
    <property type="evidence" value="ECO:0007669"/>
    <property type="project" value="RHEA"/>
</dbReference>
<dbReference type="GO" id="GO:0051287">
    <property type="term" value="F:NAD binding"/>
    <property type="evidence" value="ECO:0007669"/>
    <property type="project" value="InterPro"/>
</dbReference>
<dbReference type="CDD" id="cd05301">
    <property type="entry name" value="GDH"/>
    <property type="match status" value="1"/>
</dbReference>
<dbReference type="FunFam" id="3.40.50.720:FF:000026">
    <property type="entry name" value="Glyoxylate/hydroxypyruvate reductase B"/>
    <property type="match status" value="1"/>
</dbReference>
<dbReference type="Gene3D" id="3.40.50.720">
    <property type="entry name" value="NAD(P)-binding Rossmann-like Domain"/>
    <property type="match status" value="2"/>
</dbReference>
<dbReference type="HAMAP" id="MF_01667">
    <property type="entry name" value="2_Hacid_dh_C_GhrB"/>
    <property type="match status" value="1"/>
</dbReference>
<dbReference type="InterPro" id="IPR050223">
    <property type="entry name" value="D-isomer_2-hydroxyacid_DH"/>
</dbReference>
<dbReference type="InterPro" id="IPR006139">
    <property type="entry name" value="D-isomer_2_OHA_DH_cat_dom"/>
</dbReference>
<dbReference type="InterPro" id="IPR029753">
    <property type="entry name" value="D-isomer_DH_CS"/>
</dbReference>
<dbReference type="InterPro" id="IPR006140">
    <property type="entry name" value="D-isomer_DH_NAD-bd"/>
</dbReference>
<dbReference type="InterPro" id="IPR023756">
    <property type="entry name" value="Glyo/OHPyrv_Rdtase_B"/>
</dbReference>
<dbReference type="InterPro" id="IPR036291">
    <property type="entry name" value="NAD(P)-bd_dom_sf"/>
</dbReference>
<dbReference type="NCBIfam" id="NF011938">
    <property type="entry name" value="PRK15409.1"/>
    <property type="match status" value="1"/>
</dbReference>
<dbReference type="PANTHER" id="PTHR10996">
    <property type="entry name" value="2-HYDROXYACID DEHYDROGENASE-RELATED"/>
    <property type="match status" value="1"/>
</dbReference>
<dbReference type="PANTHER" id="PTHR10996:SF283">
    <property type="entry name" value="GLYOXYLATE_HYDROXYPYRUVATE REDUCTASE B"/>
    <property type="match status" value="1"/>
</dbReference>
<dbReference type="Pfam" id="PF00389">
    <property type="entry name" value="2-Hacid_dh"/>
    <property type="match status" value="1"/>
</dbReference>
<dbReference type="Pfam" id="PF02826">
    <property type="entry name" value="2-Hacid_dh_C"/>
    <property type="match status" value="1"/>
</dbReference>
<dbReference type="SUPFAM" id="SSF52283">
    <property type="entry name" value="Formate/glycerate dehydrogenase catalytic domain-like"/>
    <property type="match status" value="1"/>
</dbReference>
<dbReference type="SUPFAM" id="SSF51735">
    <property type="entry name" value="NAD(P)-binding Rossmann-fold domains"/>
    <property type="match status" value="1"/>
</dbReference>
<dbReference type="PROSITE" id="PS00670">
    <property type="entry name" value="D_2_HYDROXYACID_DH_2"/>
    <property type="match status" value="1"/>
</dbReference>
<dbReference type="PROSITE" id="PS00671">
    <property type="entry name" value="D_2_HYDROXYACID_DH_3"/>
    <property type="match status" value="1"/>
</dbReference>
<organism>
    <name type="scientific">Escherichia coli O9:H4 (strain HS)</name>
    <dbReference type="NCBI Taxonomy" id="331112"/>
    <lineage>
        <taxon>Bacteria</taxon>
        <taxon>Pseudomonadati</taxon>
        <taxon>Pseudomonadota</taxon>
        <taxon>Gammaproteobacteria</taxon>
        <taxon>Enterobacterales</taxon>
        <taxon>Enterobacteriaceae</taxon>
        <taxon>Escherichia</taxon>
    </lineage>
</organism>
<sequence length="324" mass="35324">MKPSVILYKALPDDLLQRLQEHFTVHQVANLSPQTVEQNAAIFAEAEGLLGSNENVDAALLEKMPKLRATSTISVGYDNFDVDALTARKILLMHTPTVLTETVADTLMALVLSTARRVVEVAERVKAGGWTASIGPDWYGTDVHHKTLGIVGMGRIGMALAQRAHFGFNMPILYNARRHHKEAEERFNARYCDLDTLLQESDFVCLILPLTDETHHLFGAEQFAKMKSSAIFINAGRGPVVDENALIAALQKGEIHAAGLDVFEQEPLSVDSPLLSMANVVAVPHIGSATHETRYGMAACAVDNLIDALQGKVEKNCVNPHVAD</sequence>
<comment type="function">
    <text evidence="1">Catalyzes the NADPH-dependent reduction of glyoxylate and hydroxypyruvate into glycolate and glycerate, respectively.</text>
</comment>
<comment type="catalytic activity">
    <reaction evidence="1">
        <text>glycolate + NADP(+) = glyoxylate + NADPH + H(+)</text>
        <dbReference type="Rhea" id="RHEA:10992"/>
        <dbReference type="ChEBI" id="CHEBI:15378"/>
        <dbReference type="ChEBI" id="CHEBI:29805"/>
        <dbReference type="ChEBI" id="CHEBI:36655"/>
        <dbReference type="ChEBI" id="CHEBI:57783"/>
        <dbReference type="ChEBI" id="CHEBI:58349"/>
        <dbReference type="EC" id="1.1.1.79"/>
    </reaction>
</comment>
<comment type="catalytic activity">
    <reaction evidence="1">
        <text>(R)-glycerate + NAD(+) = 3-hydroxypyruvate + NADH + H(+)</text>
        <dbReference type="Rhea" id="RHEA:17905"/>
        <dbReference type="ChEBI" id="CHEBI:15378"/>
        <dbReference type="ChEBI" id="CHEBI:16659"/>
        <dbReference type="ChEBI" id="CHEBI:17180"/>
        <dbReference type="ChEBI" id="CHEBI:57540"/>
        <dbReference type="ChEBI" id="CHEBI:57945"/>
        <dbReference type="EC" id="1.1.1.81"/>
    </reaction>
</comment>
<comment type="catalytic activity">
    <reaction evidence="1">
        <text>(R)-glycerate + NADP(+) = 3-hydroxypyruvate + NADPH + H(+)</text>
        <dbReference type="Rhea" id="RHEA:18657"/>
        <dbReference type="ChEBI" id="CHEBI:15378"/>
        <dbReference type="ChEBI" id="CHEBI:16659"/>
        <dbReference type="ChEBI" id="CHEBI:17180"/>
        <dbReference type="ChEBI" id="CHEBI:57783"/>
        <dbReference type="ChEBI" id="CHEBI:58349"/>
        <dbReference type="EC" id="1.1.1.81"/>
    </reaction>
</comment>
<comment type="subunit">
    <text evidence="1">Homodimer.</text>
</comment>
<comment type="subcellular location">
    <subcellularLocation>
        <location evidence="1">Cytoplasm</location>
    </subcellularLocation>
</comment>
<comment type="similarity">
    <text evidence="1">Belongs to the D-isomer specific 2-hydroxyacid dehydrogenase family. GhrB subfamily.</text>
</comment>
<protein>
    <recommendedName>
        <fullName evidence="1">Glyoxylate/hydroxypyruvate reductase B</fullName>
        <ecNumber evidence="1">1.1.1.79</ecNumber>
        <ecNumber evidence="1">1.1.1.81</ecNumber>
    </recommendedName>
</protein>
<keyword id="KW-0963">Cytoplasm</keyword>
<keyword id="KW-0520">NAD</keyword>
<keyword id="KW-0521">NADP</keyword>
<keyword id="KW-0560">Oxidoreductase</keyword>
<accession>A8A609</accession>
<gene>
    <name evidence="1" type="primary">ghrB</name>
    <name type="ordered locus">EcHS_A3754</name>
</gene>
<reference key="1">
    <citation type="journal article" date="2008" name="J. Bacteriol.">
        <title>The pangenome structure of Escherichia coli: comparative genomic analysis of E. coli commensal and pathogenic isolates.</title>
        <authorList>
            <person name="Rasko D.A."/>
            <person name="Rosovitz M.J."/>
            <person name="Myers G.S.A."/>
            <person name="Mongodin E.F."/>
            <person name="Fricke W.F."/>
            <person name="Gajer P."/>
            <person name="Crabtree J."/>
            <person name="Sebaihia M."/>
            <person name="Thomson N.R."/>
            <person name="Chaudhuri R."/>
            <person name="Henderson I.R."/>
            <person name="Sperandio V."/>
            <person name="Ravel J."/>
        </authorList>
    </citation>
    <scope>NUCLEOTIDE SEQUENCE [LARGE SCALE GENOMIC DNA]</scope>
    <source>
        <strain>HS</strain>
    </source>
</reference>
<evidence type="ECO:0000255" key="1">
    <source>
        <dbReference type="HAMAP-Rule" id="MF_01667"/>
    </source>
</evidence>
<proteinExistence type="inferred from homology"/>
<feature type="chain" id="PRO_0000348391" description="Glyoxylate/hydroxypyruvate reductase B">
    <location>
        <begin position="1"/>
        <end position="324"/>
    </location>
</feature>
<feature type="active site" evidence="1">
    <location>
        <position position="237"/>
    </location>
</feature>
<feature type="active site" evidence="1">
    <location>
        <position position="266"/>
    </location>
</feature>
<feature type="active site" description="Proton donor" evidence="1">
    <location>
        <position position="285"/>
    </location>
</feature>